<evidence type="ECO:0000250" key="1">
    <source>
        <dbReference type="UniProtKB" id="P03901"/>
    </source>
</evidence>
<evidence type="ECO:0000250" key="2">
    <source>
        <dbReference type="UniProtKB" id="P03902"/>
    </source>
</evidence>
<evidence type="ECO:0000255" key="3"/>
<evidence type="ECO:0000305" key="4"/>
<proteinExistence type="inferred from homology"/>
<reference key="1">
    <citation type="journal article" date="2005" name="Mol. Phylogenet. Evol.">
        <title>A phylogeny of the Caniformia (order Carnivora) based on 12 complete protein-coding mitochondrial genes.</title>
        <authorList>
            <person name="Delisle I."/>
            <person name="Strobeck C."/>
        </authorList>
    </citation>
    <scope>NUCLEOTIDE SEQUENCE [GENOMIC DNA]</scope>
</reference>
<reference key="2">
    <citation type="journal article" date="2006" name="Genome Res.">
        <title>Relaxation of selective constraint on dog mitochondrial DNA following domestication.</title>
        <authorList>
            <person name="Bjornerfeldt S."/>
            <person name="Webster M.T."/>
            <person name="Vila C."/>
        </authorList>
    </citation>
    <scope>NUCLEOTIDE SEQUENCE [GENOMIC DNA]</scope>
</reference>
<sequence length="98" mass="10862">MSMVYINIFLAFILSLMGMLVYRSHLMSSLLCLEGMMLSLFVMMSVTILNNHLTLASMMPIVLLVFAACEAALGLSLLVMVSNTYGTDYVQNLNLLQC</sequence>
<comment type="function">
    <text evidence="1">Core subunit of the mitochondrial membrane respiratory chain NADH dehydrogenase (Complex I) which catalyzes electron transfer from NADH through the respiratory chain, using ubiquinone as an electron acceptor. Part of the enzyme membrane arm which is embedded in the lipid bilayer and involved in proton translocation.</text>
</comment>
<comment type="catalytic activity">
    <reaction evidence="1">
        <text>a ubiquinone + NADH + 5 H(+)(in) = a ubiquinol + NAD(+) + 4 H(+)(out)</text>
        <dbReference type="Rhea" id="RHEA:29091"/>
        <dbReference type="Rhea" id="RHEA-COMP:9565"/>
        <dbReference type="Rhea" id="RHEA-COMP:9566"/>
        <dbReference type="ChEBI" id="CHEBI:15378"/>
        <dbReference type="ChEBI" id="CHEBI:16389"/>
        <dbReference type="ChEBI" id="CHEBI:17976"/>
        <dbReference type="ChEBI" id="CHEBI:57540"/>
        <dbReference type="ChEBI" id="CHEBI:57945"/>
        <dbReference type="EC" id="7.1.1.2"/>
    </reaction>
    <physiologicalReaction direction="left-to-right" evidence="1">
        <dbReference type="Rhea" id="RHEA:29092"/>
    </physiologicalReaction>
</comment>
<comment type="subunit">
    <text evidence="2">Core subunit of respiratory chain NADH dehydrogenase (Complex I) which is composed of 45 different subunits.</text>
</comment>
<comment type="subcellular location">
    <subcellularLocation>
        <location evidence="2">Mitochondrion inner membrane</location>
        <topology evidence="3">Multi-pass membrane protein</topology>
    </subcellularLocation>
</comment>
<comment type="similarity">
    <text evidence="4">Belongs to the complex I subunit 4L family.</text>
</comment>
<accession>Q3L6Y4</accession>
<gene>
    <name type="primary">MT-ND4L</name>
    <name type="synonym">MTND4L</name>
    <name type="synonym">NADH4L</name>
    <name type="synonym">ND4L</name>
</gene>
<geneLocation type="mitochondrion"/>
<feature type="chain" id="PRO_0000269899" description="NADH-ubiquinone oxidoreductase chain 4L">
    <location>
        <begin position="1"/>
        <end position="98"/>
    </location>
</feature>
<feature type="transmembrane region" description="Helical" evidence="3">
    <location>
        <begin position="1"/>
        <end position="21"/>
    </location>
</feature>
<feature type="transmembrane region" description="Helical" evidence="3">
    <location>
        <begin position="29"/>
        <end position="49"/>
    </location>
</feature>
<feature type="transmembrane region" description="Helical" evidence="3">
    <location>
        <begin position="61"/>
        <end position="81"/>
    </location>
</feature>
<keyword id="KW-0249">Electron transport</keyword>
<keyword id="KW-0472">Membrane</keyword>
<keyword id="KW-0496">Mitochondrion</keyword>
<keyword id="KW-0999">Mitochondrion inner membrane</keyword>
<keyword id="KW-0520">NAD</keyword>
<keyword id="KW-0679">Respiratory chain</keyword>
<keyword id="KW-1278">Translocase</keyword>
<keyword id="KW-0812">Transmembrane</keyword>
<keyword id="KW-1133">Transmembrane helix</keyword>
<keyword id="KW-0813">Transport</keyword>
<keyword id="KW-0830">Ubiquinone</keyword>
<protein>
    <recommendedName>
        <fullName>NADH-ubiquinone oxidoreductase chain 4L</fullName>
        <ecNumber>7.1.1.2</ecNumber>
    </recommendedName>
    <alternativeName>
        <fullName>NADH dehydrogenase subunit 4L</fullName>
    </alternativeName>
</protein>
<organism>
    <name type="scientific">Canis lupus</name>
    <name type="common">Gray wolf</name>
    <dbReference type="NCBI Taxonomy" id="9612"/>
    <lineage>
        <taxon>Eukaryota</taxon>
        <taxon>Metazoa</taxon>
        <taxon>Chordata</taxon>
        <taxon>Craniata</taxon>
        <taxon>Vertebrata</taxon>
        <taxon>Euteleostomi</taxon>
        <taxon>Mammalia</taxon>
        <taxon>Eutheria</taxon>
        <taxon>Laurasiatheria</taxon>
        <taxon>Carnivora</taxon>
        <taxon>Caniformia</taxon>
        <taxon>Canidae</taxon>
        <taxon>Canis</taxon>
    </lineage>
</organism>
<name>NU4LM_CANLU</name>
<dbReference type="EC" id="7.1.1.2"/>
<dbReference type="EMBL" id="AY598504">
    <property type="protein sequence ID" value="AAU00450.1"/>
    <property type="molecule type" value="Genomic_DNA"/>
</dbReference>
<dbReference type="EMBL" id="DQ480503">
    <property type="protein sequence ID" value="ABE48163.1"/>
    <property type="molecule type" value="Genomic_DNA"/>
</dbReference>
<dbReference type="EMBL" id="DQ480504">
    <property type="protein sequence ID" value="ABE48176.1"/>
    <property type="molecule type" value="Genomic_DNA"/>
</dbReference>
<dbReference type="EMBL" id="DQ480505">
    <property type="protein sequence ID" value="ABE48189.1"/>
    <property type="molecule type" value="Genomic_DNA"/>
</dbReference>
<dbReference type="EMBL" id="DQ480506">
    <property type="protein sequence ID" value="ABE48202.1"/>
    <property type="molecule type" value="Genomic_DNA"/>
</dbReference>
<dbReference type="EMBL" id="DQ480507">
    <property type="protein sequence ID" value="ABE48215.1"/>
    <property type="molecule type" value="Genomic_DNA"/>
</dbReference>
<dbReference type="EMBL" id="DQ480508">
    <property type="protein sequence ID" value="ABE48228.1"/>
    <property type="molecule type" value="Genomic_DNA"/>
</dbReference>
<dbReference type="RefSeq" id="YP_626736.1">
    <property type="nucleotide sequence ID" value="NC_008092.1"/>
</dbReference>
<dbReference type="SMR" id="Q3L6Y4"/>
<dbReference type="GeneID" id="4097772"/>
<dbReference type="CTD" id="4539"/>
<dbReference type="GO" id="GO:0005743">
    <property type="term" value="C:mitochondrial inner membrane"/>
    <property type="evidence" value="ECO:0000250"/>
    <property type="project" value="UniProtKB"/>
</dbReference>
<dbReference type="GO" id="GO:0045271">
    <property type="term" value="C:respiratory chain complex I"/>
    <property type="evidence" value="ECO:0000250"/>
    <property type="project" value="UniProtKB"/>
</dbReference>
<dbReference type="GO" id="GO:0008137">
    <property type="term" value="F:NADH dehydrogenase (ubiquinone) activity"/>
    <property type="evidence" value="ECO:0000250"/>
    <property type="project" value="UniProtKB"/>
</dbReference>
<dbReference type="GO" id="GO:0042773">
    <property type="term" value="P:ATP synthesis coupled electron transport"/>
    <property type="evidence" value="ECO:0007669"/>
    <property type="project" value="InterPro"/>
</dbReference>
<dbReference type="FunFam" id="1.10.287.3510:FF:000002">
    <property type="entry name" value="NADH-ubiquinone oxidoreductase chain 4L"/>
    <property type="match status" value="1"/>
</dbReference>
<dbReference type="Gene3D" id="1.10.287.3510">
    <property type="match status" value="1"/>
</dbReference>
<dbReference type="InterPro" id="IPR001133">
    <property type="entry name" value="NADH_UbQ_OxRdtase_chain4L/K"/>
</dbReference>
<dbReference type="InterPro" id="IPR039428">
    <property type="entry name" value="NUOK/Mnh_C1-like"/>
</dbReference>
<dbReference type="PANTHER" id="PTHR11434:SF0">
    <property type="entry name" value="NADH-UBIQUINONE OXIDOREDUCTASE CHAIN 4L"/>
    <property type="match status" value="1"/>
</dbReference>
<dbReference type="PANTHER" id="PTHR11434">
    <property type="entry name" value="NADH-UBIQUINONE OXIDOREDUCTASE SUBUNIT ND4L"/>
    <property type="match status" value="1"/>
</dbReference>
<dbReference type="Pfam" id="PF00420">
    <property type="entry name" value="Oxidored_q2"/>
    <property type="match status" value="1"/>
</dbReference>